<organism>
    <name type="scientific">Rattus norvegicus</name>
    <name type="common">Rat</name>
    <dbReference type="NCBI Taxonomy" id="10116"/>
    <lineage>
        <taxon>Eukaryota</taxon>
        <taxon>Metazoa</taxon>
        <taxon>Chordata</taxon>
        <taxon>Craniata</taxon>
        <taxon>Vertebrata</taxon>
        <taxon>Euteleostomi</taxon>
        <taxon>Mammalia</taxon>
        <taxon>Eutheria</taxon>
        <taxon>Euarchontoglires</taxon>
        <taxon>Glires</taxon>
        <taxon>Rodentia</taxon>
        <taxon>Myomorpha</taxon>
        <taxon>Muroidea</taxon>
        <taxon>Muridae</taxon>
        <taxon>Murinae</taxon>
        <taxon>Rattus</taxon>
    </lineage>
</organism>
<gene>
    <name type="primary">Naga</name>
</gene>
<protein>
    <recommendedName>
        <fullName>Alpha-N-acetylgalactosaminidase</fullName>
        <ecNumber>3.2.1.49</ecNumber>
    </recommendedName>
    <alternativeName>
        <fullName>Alpha-galactosidase B</fullName>
    </alternativeName>
</protein>
<dbReference type="EC" id="3.2.1.49"/>
<dbReference type="EMBL" id="BC082084">
    <property type="protein sequence ID" value="AAH82084.1"/>
    <property type="molecule type" value="mRNA"/>
</dbReference>
<dbReference type="RefSeq" id="NP_001012120.1">
    <property type="nucleotide sequence ID" value="NM_001012120.1"/>
</dbReference>
<dbReference type="RefSeq" id="XP_006242149.1">
    <property type="nucleotide sequence ID" value="XM_006242087.5"/>
</dbReference>
<dbReference type="RefSeq" id="XP_006242150.1">
    <property type="nucleotide sequence ID" value="XM_006242088.5"/>
</dbReference>
<dbReference type="SMR" id="Q66H12"/>
<dbReference type="FunCoup" id="Q66H12">
    <property type="interactions" value="1103"/>
</dbReference>
<dbReference type="IntAct" id="Q66H12">
    <property type="interactions" value="1"/>
</dbReference>
<dbReference type="STRING" id="10116.ENSRNOP00000060590"/>
<dbReference type="CAZy" id="GH27">
    <property type="family name" value="Glycoside Hydrolase Family 27"/>
</dbReference>
<dbReference type="GlyCosmos" id="Q66H12">
    <property type="glycosylation" value="4 sites, No reported glycans"/>
</dbReference>
<dbReference type="GlyGen" id="Q66H12">
    <property type="glycosylation" value="4 sites"/>
</dbReference>
<dbReference type="PhosphoSitePlus" id="Q66H12"/>
<dbReference type="jPOST" id="Q66H12"/>
<dbReference type="PaxDb" id="10116-ENSRNOP00000060590"/>
<dbReference type="Ensembl" id="ENSRNOT00000068020.3">
    <property type="protein sequence ID" value="ENSRNOP00000060590.1"/>
    <property type="gene ID" value="ENSRNOG00000008064.8"/>
</dbReference>
<dbReference type="GeneID" id="315165"/>
<dbReference type="KEGG" id="rno:315165"/>
<dbReference type="UCSC" id="RGD:1306025">
    <property type="organism name" value="rat"/>
</dbReference>
<dbReference type="AGR" id="RGD:1306025"/>
<dbReference type="CTD" id="4668"/>
<dbReference type="RGD" id="1306025">
    <property type="gene designation" value="Naga"/>
</dbReference>
<dbReference type="eggNOG" id="KOG2366">
    <property type="taxonomic scope" value="Eukaryota"/>
</dbReference>
<dbReference type="GeneTree" id="ENSGT00390000008751"/>
<dbReference type="HOGENOM" id="CLU_013093_0_0_1"/>
<dbReference type="InParanoid" id="Q66H12"/>
<dbReference type="OrthoDB" id="15387at9989"/>
<dbReference type="PhylomeDB" id="Q66H12"/>
<dbReference type="TreeFam" id="TF312909"/>
<dbReference type="PRO" id="PR:Q66H12"/>
<dbReference type="Proteomes" id="UP000002494">
    <property type="component" value="Chromosome 7"/>
</dbReference>
<dbReference type="Bgee" id="ENSRNOG00000008064">
    <property type="expression patterns" value="Expressed in jejunum and 20 other cell types or tissues"/>
</dbReference>
<dbReference type="GO" id="GO:0005737">
    <property type="term" value="C:cytoplasm"/>
    <property type="evidence" value="ECO:0000318"/>
    <property type="project" value="GO_Central"/>
</dbReference>
<dbReference type="GO" id="GO:0005764">
    <property type="term" value="C:lysosome"/>
    <property type="evidence" value="ECO:0007669"/>
    <property type="project" value="UniProtKB-SubCell"/>
</dbReference>
<dbReference type="GO" id="GO:0016020">
    <property type="term" value="C:membrane"/>
    <property type="evidence" value="ECO:0007669"/>
    <property type="project" value="GOC"/>
</dbReference>
<dbReference type="GO" id="GO:0004557">
    <property type="term" value="F:alpha-galactosidase activity"/>
    <property type="evidence" value="ECO:0000318"/>
    <property type="project" value="GO_Central"/>
</dbReference>
<dbReference type="GO" id="GO:0008456">
    <property type="term" value="F:alpha-N-acetylgalactosaminidase activity"/>
    <property type="evidence" value="ECO:0000250"/>
    <property type="project" value="UniProtKB"/>
</dbReference>
<dbReference type="GO" id="GO:0042803">
    <property type="term" value="F:protein homodimerization activity"/>
    <property type="evidence" value="ECO:0000266"/>
    <property type="project" value="RGD"/>
</dbReference>
<dbReference type="GO" id="GO:0016052">
    <property type="term" value="P:carbohydrate catabolic process"/>
    <property type="evidence" value="ECO:0000250"/>
    <property type="project" value="UniProtKB"/>
</dbReference>
<dbReference type="GO" id="GO:0019377">
    <property type="term" value="P:glycolipid catabolic process"/>
    <property type="evidence" value="ECO:0000250"/>
    <property type="project" value="UniProtKB"/>
</dbReference>
<dbReference type="GO" id="GO:0016139">
    <property type="term" value="P:glycoside catabolic process"/>
    <property type="evidence" value="ECO:0000318"/>
    <property type="project" value="GO_Central"/>
</dbReference>
<dbReference type="GO" id="GO:0009311">
    <property type="term" value="P:oligosaccharide metabolic process"/>
    <property type="evidence" value="ECO:0000318"/>
    <property type="project" value="GO_Central"/>
</dbReference>
<dbReference type="CDD" id="cd14792">
    <property type="entry name" value="GH27"/>
    <property type="match status" value="1"/>
</dbReference>
<dbReference type="FunFam" id="2.60.40.1180:FF:000025">
    <property type="entry name" value="Alpha-galactosidase"/>
    <property type="match status" value="1"/>
</dbReference>
<dbReference type="FunFam" id="3.20.20.70:FF:000070">
    <property type="entry name" value="Alpha-galactosidase"/>
    <property type="match status" value="1"/>
</dbReference>
<dbReference type="Gene3D" id="3.20.20.70">
    <property type="entry name" value="Aldolase class I"/>
    <property type="match status" value="1"/>
</dbReference>
<dbReference type="Gene3D" id="2.60.40.1180">
    <property type="entry name" value="Golgi alpha-mannosidase II"/>
    <property type="match status" value="1"/>
</dbReference>
<dbReference type="InterPro" id="IPR013785">
    <property type="entry name" value="Aldolase_TIM"/>
</dbReference>
<dbReference type="InterPro" id="IPR002241">
    <property type="entry name" value="Glyco_hydro_27"/>
</dbReference>
<dbReference type="InterPro" id="IPR000111">
    <property type="entry name" value="Glyco_hydro_27/36_CS"/>
</dbReference>
<dbReference type="InterPro" id="IPR013780">
    <property type="entry name" value="Glyco_hydro_b"/>
</dbReference>
<dbReference type="InterPro" id="IPR017853">
    <property type="entry name" value="Glycoside_hydrolase_SF"/>
</dbReference>
<dbReference type="InterPro" id="IPR035373">
    <property type="entry name" value="Melibiase/NAGA_C"/>
</dbReference>
<dbReference type="PANTHER" id="PTHR11452">
    <property type="entry name" value="ALPHA-GALACTOSIDASE/ALPHA-N-ACETYLGALACTOSAMINIDASE"/>
    <property type="match status" value="1"/>
</dbReference>
<dbReference type="PANTHER" id="PTHR11452:SF25">
    <property type="entry name" value="ALPHA-N-ACETYLGALACTOSAMINIDASE"/>
    <property type="match status" value="1"/>
</dbReference>
<dbReference type="Pfam" id="PF16499">
    <property type="entry name" value="Melibiase_2"/>
    <property type="match status" value="1"/>
</dbReference>
<dbReference type="Pfam" id="PF17450">
    <property type="entry name" value="Melibiase_2_C"/>
    <property type="match status" value="1"/>
</dbReference>
<dbReference type="PRINTS" id="PR00740">
    <property type="entry name" value="GLHYDRLASE27"/>
</dbReference>
<dbReference type="SUPFAM" id="SSF51445">
    <property type="entry name" value="(Trans)glycosidases"/>
    <property type="match status" value="1"/>
</dbReference>
<dbReference type="SUPFAM" id="SSF51011">
    <property type="entry name" value="Glycosyl hydrolase domain"/>
    <property type="match status" value="1"/>
</dbReference>
<dbReference type="PROSITE" id="PS00512">
    <property type="entry name" value="ALPHA_GALACTOSIDASE"/>
    <property type="match status" value="1"/>
</dbReference>
<accession>Q66H12</accession>
<keyword id="KW-1015">Disulfide bond</keyword>
<keyword id="KW-0325">Glycoprotein</keyword>
<keyword id="KW-0326">Glycosidase</keyword>
<keyword id="KW-0378">Hydrolase</keyword>
<keyword id="KW-0443">Lipid metabolism</keyword>
<keyword id="KW-0458">Lysosome</keyword>
<keyword id="KW-0597">Phosphoprotein</keyword>
<keyword id="KW-1185">Reference proteome</keyword>
<keyword id="KW-0732">Signal</keyword>
<name>NAGAB_RAT</name>
<sequence>MLQKTVLLLALVAQVLMLENGLLRTPPMGWLAWERFRCNINCEEDPKNCISERLFMEMADRLAQDGWRDLGYVYLNIDDCWIGGRDATGRLIPDPKRFPHGIAFLADYAHSLGLKLGIYEDMGKMTCMGYPGTTLDKVELDAATFAEWKVDMLKLDGCYSTPKERAEGYPKMAAALNATGRPIAFSCSWPAYEGGLPPKVNYTEVAGTCNLWRNYKDIQDSWKSVLSILDWFVKHQDILQPVSGPGHWNDPDMLLIGNFGLSFDESRAQMALWTVLAAPLFMSTDLRTISPQNIDILQNPLLIKINQDPLGIQGRLIFKSKSHIEVFKRNLSDDASALVFFSRRTDMPYHFHCSLLELNYPKGSVYEGQNVFTGDIISGLHPETNFTVIINPSGVVMWYLYPVKGLGIYTMMSQL</sequence>
<evidence type="ECO:0000250" key="1"/>
<evidence type="ECO:0000250" key="2">
    <source>
        <dbReference type="UniProtKB" id="P17050"/>
    </source>
</evidence>
<evidence type="ECO:0000255" key="3"/>
<evidence type="ECO:0000305" key="4"/>
<comment type="function">
    <text evidence="2">Removes terminal alpha-N-acetylgalactosamine residues from glycolipids and glycopeptides. Required for the breakdown of glycolipids.</text>
</comment>
<comment type="catalytic activity">
    <reaction>
        <text>Cleavage of non-reducing alpha-(1-&gt;3)-N-acetylgalactosamine residues from human blood group A and AB mucin glycoproteins, Forssman hapten and blood group A lacto series glycolipids.</text>
        <dbReference type="EC" id="3.2.1.49"/>
    </reaction>
</comment>
<comment type="catalytic activity">
    <reaction evidence="2">
        <text>a neolactoside IV(3)-alpha-GalNAc,IV(2)-alpha-Fuc-nLc4Cer(d18:1(4E)) + H2O = a neolactoside IV(2)-alpha-Fuc-nLc4Cer(d18:1(4E)) + N-acetyl-alpha-D-galactosamine</text>
        <dbReference type="Rhea" id="RHEA:48212"/>
        <dbReference type="ChEBI" id="CHEBI:15377"/>
        <dbReference type="ChEBI" id="CHEBI:28471"/>
        <dbReference type="ChEBI" id="CHEBI:28691"/>
        <dbReference type="ChEBI" id="CHEBI:40356"/>
    </reaction>
    <physiologicalReaction direction="left-to-right" evidence="2">
        <dbReference type="Rhea" id="RHEA:48213"/>
    </physiologicalReaction>
</comment>
<comment type="catalytic activity">
    <reaction evidence="2">
        <text>a neolactoside IV(3)-alpha-GalNAc,IV(2)-alpha-Fuc-nLc4Cer(d18:0) + H2O = a neolactoside IV(2)-alpha-Fuc-nLc4Cer(d18:0) + N-acetyl-alpha-D-galactosamine</text>
        <dbReference type="Rhea" id="RHEA:49304"/>
        <dbReference type="ChEBI" id="CHEBI:15377"/>
        <dbReference type="ChEBI" id="CHEBI:40356"/>
        <dbReference type="ChEBI" id="CHEBI:91118"/>
        <dbReference type="ChEBI" id="CHEBI:91119"/>
    </reaction>
    <physiologicalReaction direction="left-to-right" evidence="2">
        <dbReference type="Rhea" id="RHEA:49305"/>
    </physiologicalReaction>
</comment>
<comment type="catalytic activity">
    <reaction evidence="2">
        <text>a globoside IV3GalNAc-Gb4Cer + H2O = N-acetyl-alpha-D-galactosamine + a globoside Gb4Cer</text>
        <dbReference type="Rhea" id="RHEA:48412"/>
        <dbReference type="ChEBI" id="CHEBI:15377"/>
        <dbReference type="ChEBI" id="CHEBI:40356"/>
        <dbReference type="ChEBI" id="CHEBI:88167"/>
        <dbReference type="ChEBI" id="CHEBI:90400"/>
    </reaction>
    <physiologicalReaction direction="left-to-right" evidence="2">
        <dbReference type="Rhea" id="RHEA:48413"/>
    </physiologicalReaction>
</comment>
<comment type="subunit">
    <text evidence="2">Homodimer.</text>
</comment>
<comment type="subcellular location">
    <subcellularLocation>
        <location evidence="2">Lysosome</location>
    </subcellularLocation>
</comment>
<comment type="similarity">
    <text evidence="4">Belongs to the glycosyl hydrolase 27 family.</text>
</comment>
<proteinExistence type="evidence at transcript level"/>
<reference key="1">
    <citation type="journal article" date="2004" name="Genome Res.">
        <title>The status, quality, and expansion of the NIH full-length cDNA project: the Mammalian Gene Collection (MGC).</title>
        <authorList>
            <consortium name="The MGC Project Team"/>
        </authorList>
    </citation>
    <scope>NUCLEOTIDE SEQUENCE [LARGE SCALE MRNA]</scope>
    <source>
        <tissue>Testis</tissue>
    </source>
</reference>
<feature type="signal peptide" evidence="1">
    <location>
        <begin position="1"/>
        <end position="17"/>
    </location>
</feature>
<feature type="chain" id="PRO_0000001020" description="Alpha-N-acetylgalactosaminidase">
    <location>
        <begin position="18"/>
        <end position="415"/>
    </location>
</feature>
<feature type="active site" description="Nucleophile" evidence="1">
    <location>
        <position position="156"/>
    </location>
</feature>
<feature type="active site" description="Proton donor" evidence="1">
    <location>
        <position position="217"/>
    </location>
</feature>
<feature type="binding site" evidence="1">
    <location>
        <begin position="78"/>
        <end position="79"/>
    </location>
    <ligand>
        <name>substrate</name>
    </ligand>
</feature>
<feature type="binding site" evidence="1">
    <location>
        <position position="154"/>
    </location>
    <ligand>
        <name>substrate</name>
    </ligand>
</feature>
<feature type="binding site" evidence="1">
    <location>
        <position position="188"/>
    </location>
    <ligand>
        <name>substrate</name>
    </ligand>
</feature>
<feature type="binding site" evidence="1">
    <location>
        <position position="213"/>
    </location>
    <ligand>
        <name>substrate</name>
    </ligand>
</feature>
<feature type="binding site" evidence="1">
    <location>
        <position position="217"/>
    </location>
    <ligand>
        <name>substrate</name>
    </ligand>
</feature>
<feature type="modified residue" description="Phosphoserine" evidence="2">
    <location>
        <position position="322"/>
    </location>
</feature>
<feature type="modified residue" description="Phosphoserine" evidence="2">
    <location>
        <position position="332"/>
    </location>
</feature>
<feature type="glycosylation site" description="N-linked (GlcNAc...) asparagine" evidence="1">
    <location>
        <position position="177"/>
    </location>
</feature>
<feature type="glycosylation site" description="N-linked (GlcNAc...) asparagine" evidence="3">
    <location>
        <position position="201"/>
    </location>
</feature>
<feature type="glycosylation site" description="N-linked (GlcNAc...) asparagine" evidence="3">
    <location>
        <position position="330"/>
    </location>
</feature>
<feature type="glycosylation site" description="N-linked (GlcNAc...) asparagine" evidence="3">
    <location>
        <position position="385"/>
    </location>
</feature>
<feature type="disulfide bond" evidence="1">
    <location>
        <begin position="38"/>
        <end position="80"/>
    </location>
</feature>
<feature type="disulfide bond" evidence="1">
    <location>
        <begin position="42"/>
        <end position="49"/>
    </location>
</feature>
<feature type="disulfide bond" evidence="1">
    <location>
        <begin position="127"/>
        <end position="158"/>
    </location>
</feature>
<feature type="disulfide bond" evidence="1">
    <location>
        <begin position="187"/>
        <end position="209"/>
    </location>
</feature>